<keyword id="KW-0936">Ethylene signaling pathway</keyword>
<keyword id="KW-0539">Nucleus</keyword>
<keyword id="KW-1185">Reference proteome</keyword>
<keyword id="KW-0833">Ubl conjugation pathway</keyword>
<protein>
    <recommendedName>
        <fullName>EIN3-binding F-box protein 1</fullName>
    </recommendedName>
    <alternativeName>
        <fullName>F-box/LRR-repeat protein 6</fullName>
    </alternativeName>
</protein>
<gene>
    <name type="primary">EBF1</name>
    <name type="synonym">FBL6</name>
    <name type="ordered locus">At2g25490</name>
    <name type="ORF">F13B15.15</name>
</gene>
<comment type="function">
    <text evidence="3">Component of SCF(EBF1) E3 ubiquitin ligase complexes, which may mediate the ubiquitination and subsequent proteasomal degradation of target proteins (probably including EIN3 and EIL1). Regulator of the ethylene signaling cascade by modulating the stability of EIN3 and EIL1 proteins. Confers insensitivity to ethylene.</text>
</comment>
<comment type="pathway">
    <text>Protein modification; protein ubiquitination.</text>
</comment>
<comment type="subunit">
    <text evidence="2 3 4">Part of a SCF (SKP1-cullin-F-box) protein ligase complex. Interacts with CUL1, SKP1A/ASK1, SKP1B/ASK2, ASK11, ASK12, ASK13, ASK18, EIN3, and EIL1.</text>
</comment>
<comment type="interaction">
    <interactant intactId="EBI-401198">
        <id>Q9SKK0</id>
    </interactant>
    <interactant intactId="EBI-401185">
        <id>O49484</id>
        <label>ASK11</label>
    </interactant>
    <organismsDiffer>false</organismsDiffer>
    <experiments>3</experiments>
</comment>
<comment type="interaction">
    <interactant intactId="EBI-401198">
        <id>Q9SKK0</id>
    </interactant>
    <interactant intactId="EBI-15191983">
        <id>A0A1I9LTW1</id>
        <label>At3g54390</label>
    </interactant>
    <organismsDiffer>false</organismsDiffer>
    <experiments>3</experiments>
</comment>
<comment type="interaction">
    <interactant intactId="EBI-401198">
        <id>Q9SKK0</id>
    </interactant>
    <interactant intactId="EBI-25518256">
        <id>A0A178VSX5</id>
        <label>AXX17_At2g44610</label>
    </interactant>
    <organismsDiffer>false</organismsDiffer>
    <experiments>3</experiments>
</comment>
<comment type="interaction">
    <interactant intactId="EBI-401198">
        <id>Q9SKK0</id>
    </interactant>
    <interactant intactId="EBI-532411">
        <id>Q94AH6</id>
        <label>CUL1</label>
    </interactant>
    <organismsDiffer>false</organismsDiffer>
    <experiments>4</experiments>
</comment>
<comment type="interaction">
    <interactant intactId="EBI-401198">
        <id>Q9SKK0</id>
    </interactant>
    <interactant intactId="EBI-593576">
        <id>O24606</id>
        <label>EIN3</label>
    </interactant>
    <organismsDiffer>false</organismsDiffer>
    <experiments>4</experiments>
</comment>
<comment type="interaction">
    <interactant intactId="EBI-401198">
        <id>Q9SKK0</id>
    </interactant>
    <interactant intactId="EBI-2012188">
        <id>Q8RXD6</id>
        <label>HUB1</label>
    </interactant>
    <organismsDiffer>false</organismsDiffer>
    <experiments>3</experiments>
</comment>
<comment type="interaction">
    <interactant intactId="EBI-401198">
        <id>Q9SKK0</id>
    </interactant>
    <interactant intactId="EBI-530486">
        <id>P46639</id>
        <label>KNAT1</label>
    </interactant>
    <organismsDiffer>false</organismsDiffer>
    <experiments>3</experiments>
</comment>
<comment type="interaction">
    <interactant intactId="EBI-401198">
        <id>Q9SKK0</id>
    </interactant>
    <interactant intactId="EBI-25506855">
        <id>O23160</id>
        <label>MYB73</label>
    </interactant>
    <organismsDiffer>false</organismsDiffer>
    <experiments>3</experiments>
</comment>
<comment type="interaction">
    <interactant intactId="EBI-401198">
        <id>Q9SKK0</id>
    </interactant>
    <interactant intactId="EBI-604272">
        <id>Q9CAN4</id>
        <label>PP2A11</label>
    </interactant>
    <organismsDiffer>false</organismsDiffer>
    <experiments>4</experiments>
</comment>
<comment type="interaction">
    <interactant intactId="EBI-401198">
        <id>Q9SKK0</id>
    </interactant>
    <interactant intactId="EBI-25518040">
        <id>A8MRK9</id>
        <label>RPC14</label>
    </interactant>
    <organismsDiffer>false</organismsDiffer>
    <experiments>3</experiments>
</comment>
<comment type="interaction">
    <interactant intactId="EBI-401198">
        <id>Q9SKK0</id>
    </interactant>
    <interactant intactId="EBI-532357">
        <id>Q39255</id>
        <label>SKP1A</label>
    </interactant>
    <organismsDiffer>false</organismsDiffer>
    <experiments>7</experiments>
</comment>
<comment type="interaction">
    <interactant intactId="EBI-401198">
        <id>Q9SKK0</id>
    </interactant>
    <interactant intactId="EBI-604076">
        <id>Q9FHW7</id>
        <label>SKP1B</label>
    </interactant>
    <organismsDiffer>false</organismsDiffer>
    <experiments>5</experiments>
</comment>
<comment type="interaction">
    <interactant intactId="EBI-401198">
        <id>Q9SKK0</id>
    </interactant>
    <interactant intactId="EBI-1536703">
        <id>Q9FUA4</id>
        <label>SPT</label>
    </interactant>
    <organismsDiffer>false</organismsDiffer>
    <experiments>3</experiments>
</comment>
<comment type="interaction">
    <interactant intactId="EBI-401198">
        <id>Q9SKK0</id>
    </interactant>
    <interactant intactId="EBI-401164">
        <id>P43291</id>
        <label>SRK2A</label>
    </interactant>
    <organismsDiffer>false</organismsDiffer>
    <experiments>2</experiments>
</comment>
<comment type="interaction">
    <interactant intactId="EBI-401198">
        <id>Q9SKK0</id>
    </interactant>
    <interactant intactId="EBI-15192297">
        <id>Q9LQF0</id>
        <label>TCP23</label>
    </interactant>
    <organismsDiffer>false</organismsDiffer>
    <experiments>3</experiments>
</comment>
<comment type="interaction">
    <interactant intactId="EBI-401198">
        <id>Q9SKK0</id>
    </interactant>
    <interactant intactId="EBI-4426557">
        <id>Q84MB2</id>
        <label>TIFY8</label>
    </interactant>
    <organismsDiffer>false</organismsDiffer>
    <experiments>5</experiments>
</comment>
<comment type="interaction">
    <interactant intactId="EBI-401198">
        <id>Q9SKK0</id>
    </interactant>
    <interactant intactId="EBI-3133156">
        <id>O22768</id>
        <label>UNE12</label>
    </interactant>
    <organismsDiffer>false</organismsDiffer>
    <experiments>3</experiments>
</comment>
<comment type="interaction">
    <interactant intactId="EBI-401198">
        <id>Q9SKK0</id>
    </interactant>
    <interactant intactId="EBI-15193683">
        <id>Q5CCK4</id>
        <label>VAL2</label>
    </interactant>
    <organismsDiffer>false</organismsDiffer>
    <experiments>3</experiments>
</comment>
<comment type="subcellular location">
    <subcellularLocation>
        <location evidence="3">Nucleus</location>
    </subcellularLocation>
</comment>
<comment type="tissue specificity">
    <text evidence="3">Ubiquitous.</text>
</comment>
<comment type="induction">
    <text evidence="3">EIN3-dependent induction by ethylene.</text>
</comment>
<comment type="domain">
    <text evidence="1">The F-box is necessary for the interaction with ASK proteins.</text>
</comment>
<reference key="1">
    <citation type="journal article" date="2003" name="Cell">
        <title>EIN3-dependent regulation of plant ethylene hormone signaling by two Arabidopsis F box proteins: EBF1 and EBF2.</title>
        <authorList>
            <person name="Potuschak T."/>
            <person name="Lechner E."/>
            <person name="Parmentier Y."/>
            <person name="Yanagisawa S."/>
            <person name="Grava S."/>
            <person name="Koncz C."/>
            <person name="Genschik P."/>
        </authorList>
    </citation>
    <scope>NUCLEOTIDE SEQUENCE [GENOMIC DNA]</scope>
    <scope>FUNCTION</scope>
    <scope>TISSUE SPECIFICITY</scope>
    <scope>SUBCELLULAR LOCATION</scope>
    <scope>INDUCTION</scope>
    <scope>INTERACTION WITH CUL1; SKP1A/ASK1; SKP1B/ASK2; EIN3 AND EIL1</scope>
</reference>
<reference key="2">
    <citation type="journal article" date="1999" name="Nature">
        <title>Sequence and analysis of chromosome 2 of the plant Arabidopsis thaliana.</title>
        <authorList>
            <person name="Lin X."/>
            <person name="Kaul S."/>
            <person name="Rounsley S.D."/>
            <person name="Shea T.P."/>
            <person name="Benito M.-I."/>
            <person name="Town C.D."/>
            <person name="Fujii C.Y."/>
            <person name="Mason T.M."/>
            <person name="Bowman C.L."/>
            <person name="Barnstead M.E."/>
            <person name="Feldblyum T.V."/>
            <person name="Buell C.R."/>
            <person name="Ketchum K.A."/>
            <person name="Lee J.J."/>
            <person name="Ronning C.M."/>
            <person name="Koo H.L."/>
            <person name="Moffat K.S."/>
            <person name="Cronin L.A."/>
            <person name="Shen M."/>
            <person name="Pai G."/>
            <person name="Van Aken S."/>
            <person name="Umayam L."/>
            <person name="Tallon L.J."/>
            <person name="Gill J.E."/>
            <person name="Adams M.D."/>
            <person name="Carrera A.J."/>
            <person name="Creasy T.H."/>
            <person name="Goodman H.M."/>
            <person name="Somerville C.R."/>
            <person name="Copenhaver G.P."/>
            <person name="Preuss D."/>
            <person name="Nierman W.C."/>
            <person name="White O."/>
            <person name="Eisen J.A."/>
            <person name="Salzberg S.L."/>
            <person name="Fraser C.M."/>
            <person name="Venter J.C."/>
        </authorList>
    </citation>
    <scope>NUCLEOTIDE SEQUENCE [LARGE SCALE GENOMIC DNA]</scope>
    <source>
        <strain>cv. Columbia</strain>
    </source>
</reference>
<reference key="3">
    <citation type="journal article" date="2017" name="Plant J.">
        <title>Araport11: a complete reannotation of the Arabidopsis thaliana reference genome.</title>
        <authorList>
            <person name="Cheng C.Y."/>
            <person name="Krishnakumar V."/>
            <person name="Chan A.P."/>
            <person name="Thibaud-Nissen F."/>
            <person name="Schobel S."/>
            <person name="Town C.D."/>
        </authorList>
    </citation>
    <scope>GENOME REANNOTATION</scope>
    <source>
        <strain>cv. Columbia</strain>
    </source>
</reference>
<reference key="4">
    <citation type="journal article" date="2003" name="Science">
        <title>Empirical analysis of transcriptional activity in the Arabidopsis genome.</title>
        <authorList>
            <person name="Yamada K."/>
            <person name="Lim J."/>
            <person name="Dale J.M."/>
            <person name="Chen H."/>
            <person name="Shinn P."/>
            <person name="Palm C.J."/>
            <person name="Southwick A.M."/>
            <person name="Wu H.C."/>
            <person name="Kim C.J."/>
            <person name="Nguyen M."/>
            <person name="Pham P.K."/>
            <person name="Cheuk R.F."/>
            <person name="Karlin-Newmann G."/>
            <person name="Liu S.X."/>
            <person name="Lam B."/>
            <person name="Sakano H."/>
            <person name="Wu T."/>
            <person name="Yu G."/>
            <person name="Miranda M."/>
            <person name="Quach H.L."/>
            <person name="Tripp M."/>
            <person name="Chang C.H."/>
            <person name="Lee J.M."/>
            <person name="Toriumi M.J."/>
            <person name="Chan M.M."/>
            <person name="Tang C.C."/>
            <person name="Onodera C.S."/>
            <person name="Deng J.M."/>
            <person name="Akiyama K."/>
            <person name="Ansari Y."/>
            <person name="Arakawa T."/>
            <person name="Banh J."/>
            <person name="Banno F."/>
            <person name="Bowser L."/>
            <person name="Brooks S.Y."/>
            <person name="Carninci P."/>
            <person name="Chao Q."/>
            <person name="Choy N."/>
            <person name="Enju A."/>
            <person name="Goldsmith A.D."/>
            <person name="Gurjal M."/>
            <person name="Hansen N.F."/>
            <person name="Hayashizaki Y."/>
            <person name="Johnson-Hopson C."/>
            <person name="Hsuan V.W."/>
            <person name="Iida K."/>
            <person name="Karnes M."/>
            <person name="Khan S."/>
            <person name="Koesema E."/>
            <person name="Ishida J."/>
            <person name="Jiang P.X."/>
            <person name="Jones T."/>
            <person name="Kawai J."/>
            <person name="Kamiya A."/>
            <person name="Meyers C."/>
            <person name="Nakajima M."/>
            <person name="Narusaka M."/>
            <person name="Seki M."/>
            <person name="Sakurai T."/>
            <person name="Satou M."/>
            <person name="Tamse R."/>
            <person name="Vaysberg M."/>
            <person name="Wallender E.K."/>
            <person name="Wong C."/>
            <person name="Yamamura Y."/>
            <person name="Yuan S."/>
            <person name="Shinozaki K."/>
            <person name="Davis R.W."/>
            <person name="Theologis A."/>
            <person name="Ecker J.R."/>
        </authorList>
    </citation>
    <scope>NUCLEOTIDE SEQUENCE [LARGE SCALE MRNA]</scope>
    <source>
        <strain>cv. Columbia</strain>
    </source>
</reference>
<reference key="5">
    <citation type="journal article" date="2009" name="DNA Res.">
        <title>Analysis of multiple occurrences of alternative splicing events in Arabidopsis thaliana using novel sequenced full-length cDNAs.</title>
        <authorList>
            <person name="Iida K."/>
            <person name="Fukami-Kobayashi K."/>
            <person name="Toyoda A."/>
            <person name="Sakaki Y."/>
            <person name="Kobayashi M."/>
            <person name="Seki M."/>
            <person name="Shinozaki K."/>
        </authorList>
    </citation>
    <scope>NUCLEOTIDE SEQUENCE [LARGE SCALE MRNA] OF 25-628</scope>
    <source>
        <strain>cv. Columbia</strain>
    </source>
</reference>
<reference key="6">
    <citation type="submission" date="2006-07" db="EMBL/GenBank/DDBJ databases">
        <title>Large-scale analysis of RIKEN Arabidopsis full-length (RAFL) cDNAs.</title>
        <authorList>
            <person name="Totoki Y."/>
            <person name="Seki M."/>
            <person name="Ishida J."/>
            <person name="Nakajima M."/>
            <person name="Enju A."/>
            <person name="Kamiya A."/>
            <person name="Narusaka M."/>
            <person name="Shin-i T."/>
            <person name="Nakagawa M."/>
            <person name="Sakamoto N."/>
            <person name="Oishi K."/>
            <person name="Kohara Y."/>
            <person name="Kobayashi M."/>
            <person name="Toyoda A."/>
            <person name="Sakaki Y."/>
            <person name="Sakurai T."/>
            <person name="Iida K."/>
            <person name="Akiyama K."/>
            <person name="Satou M."/>
            <person name="Toyoda T."/>
            <person name="Konagaya A."/>
            <person name="Carninci P."/>
            <person name="Kawai J."/>
            <person name="Hayashizaki Y."/>
            <person name="Shinozaki K."/>
        </authorList>
    </citation>
    <scope>NUCLEOTIDE SEQUENCE [LARGE SCALE MRNA] OF 245-384</scope>
    <source>
        <strain>cv. Columbia</strain>
    </source>
</reference>
<reference key="7">
    <citation type="journal article" date="2000" name="Trends Plant Sci.">
        <title>F-box proteins in Arabidopsis.</title>
        <authorList>
            <person name="Xiao W."/>
            <person name="Jang J.-C."/>
        </authorList>
    </citation>
    <scope>GENE FAMILY</scope>
    <scope>NOMENCLATURE</scope>
</reference>
<reference key="8">
    <citation type="journal article" date="2002" name="Proc. Natl. Acad. Sci. U.S.A.">
        <title>The F-box subunit of the SCF E3 complex is encoded by a diverse superfamily of genes in Arabidopsis.</title>
        <authorList>
            <person name="Gagne J.M."/>
            <person name="Downes B.P."/>
            <person name="Shiu S.-H."/>
            <person name="Durski A.M."/>
            <person name="Vierstra R.D."/>
        </authorList>
    </citation>
    <scope>INTERACTION WITH SKP1A/ASK1; SKP1B/ASK2; ASK11; ASK13 AND ASK18</scope>
</reference>
<reference key="9">
    <citation type="journal article" date="2004" name="Plant Cell Physiol.">
        <title>Expression and interaction analysis of Arabidopsis Skp1-related genes.</title>
        <authorList>
            <person name="Takahashi N."/>
            <person name="Kuroda H."/>
            <person name="Kuromori T."/>
            <person name="Hirayama T."/>
            <person name="Seki M."/>
            <person name="Shinozaki K."/>
            <person name="Shimada H."/>
            <person name="Matsui M."/>
        </authorList>
    </citation>
    <scope>INTERACTION WITH SKP1A/ASK1; SKP1B/ASK2; ASK11 AND ASK12</scope>
</reference>
<name>EBF1_ARATH</name>
<evidence type="ECO:0000250" key="1"/>
<evidence type="ECO:0000269" key="2">
    <source>
    </source>
</evidence>
<evidence type="ECO:0000269" key="3">
    <source>
    </source>
</evidence>
<evidence type="ECO:0000269" key="4">
    <source>
    </source>
</evidence>
<accession>Q9SKK0</accession>
<accession>B9DHK7</accession>
<accession>Q0WM37</accession>
<proteinExistence type="evidence at protein level"/>
<dbReference type="EMBL" id="AJ609238">
    <property type="protein sequence ID" value="CAE75864.1"/>
    <property type="molecule type" value="Genomic_RNA"/>
</dbReference>
<dbReference type="EMBL" id="AC006300">
    <property type="protein sequence ID" value="AAD20708.1"/>
    <property type="molecule type" value="Genomic_DNA"/>
</dbReference>
<dbReference type="EMBL" id="CP002685">
    <property type="protein sequence ID" value="AEC07708.1"/>
    <property type="molecule type" value="Genomic_DNA"/>
</dbReference>
<dbReference type="EMBL" id="AY072205">
    <property type="protein sequence ID" value="AAL60026.1"/>
    <property type="molecule type" value="mRNA"/>
</dbReference>
<dbReference type="EMBL" id="AY091333">
    <property type="protein sequence ID" value="AAM14272.1"/>
    <property type="molecule type" value="mRNA"/>
</dbReference>
<dbReference type="EMBL" id="AK317560">
    <property type="protein sequence ID" value="BAH20224.1"/>
    <property type="molecule type" value="mRNA"/>
</dbReference>
<dbReference type="EMBL" id="AK229995">
    <property type="protein sequence ID" value="BAF01819.1"/>
    <property type="molecule type" value="mRNA"/>
</dbReference>
<dbReference type="PIR" id="A84649">
    <property type="entry name" value="A84649"/>
</dbReference>
<dbReference type="RefSeq" id="NP_565597.1">
    <property type="nucleotide sequence ID" value="NM_128106.4"/>
</dbReference>
<dbReference type="SMR" id="Q9SKK0"/>
<dbReference type="BioGRID" id="2439">
    <property type="interactions" value="26"/>
</dbReference>
<dbReference type="DIP" id="DIP-31329N"/>
<dbReference type="FunCoup" id="Q9SKK0">
    <property type="interactions" value="968"/>
</dbReference>
<dbReference type="IntAct" id="Q9SKK0">
    <property type="interactions" value="27"/>
</dbReference>
<dbReference type="STRING" id="3702.Q9SKK0"/>
<dbReference type="PaxDb" id="3702-AT2G25490.1"/>
<dbReference type="ProteomicsDB" id="224711"/>
<dbReference type="EnsemblPlants" id="AT2G25490.1">
    <property type="protein sequence ID" value="AT2G25490.1"/>
    <property type="gene ID" value="AT2G25490"/>
</dbReference>
<dbReference type="GeneID" id="817087"/>
<dbReference type="Gramene" id="AT2G25490.1">
    <property type="protein sequence ID" value="AT2G25490.1"/>
    <property type="gene ID" value="AT2G25490"/>
</dbReference>
<dbReference type="KEGG" id="ath:AT2G25490"/>
<dbReference type="Araport" id="AT2G25490"/>
<dbReference type="TAIR" id="AT2G25490">
    <property type="gene designation" value="EBF1"/>
</dbReference>
<dbReference type="eggNOG" id="KOG1947">
    <property type="taxonomic scope" value="Eukaryota"/>
</dbReference>
<dbReference type="HOGENOM" id="CLU_016072_2_0_1"/>
<dbReference type="InParanoid" id="Q9SKK0"/>
<dbReference type="OMA" id="LLWRCDI"/>
<dbReference type="PhylomeDB" id="Q9SKK0"/>
<dbReference type="UniPathway" id="UPA00143"/>
<dbReference type="PRO" id="PR:Q9SKK0"/>
<dbReference type="Proteomes" id="UP000006548">
    <property type="component" value="Chromosome 2"/>
</dbReference>
<dbReference type="ExpressionAtlas" id="Q9SKK0">
    <property type="expression patterns" value="baseline and differential"/>
</dbReference>
<dbReference type="GO" id="GO:0005737">
    <property type="term" value="C:cytoplasm"/>
    <property type="evidence" value="ECO:0000314"/>
    <property type="project" value="TAIR"/>
</dbReference>
<dbReference type="GO" id="GO:0005634">
    <property type="term" value="C:nucleus"/>
    <property type="evidence" value="ECO:0000314"/>
    <property type="project" value="TAIR"/>
</dbReference>
<dbReference type="GO" id="GO:0009873">
    <property type="term" value="P:ethylene-activated signaling pathway"/>
    <property type="evidence" value="ECO:0007669"/>
    <property type="project" value="UniProtKB-KW"/>
</dbReference>
<dbReference type="GO" id="GO:0010105">
    <property type="term" value="P:negative regulation of ethylene-activated signaling pathway"/>
    <property type="evidence" value="ECO:0000304"/>
    <property type="project" value="TAIR"/>
</dbReference>
<dbReference type="GO" id="GO:0016567">
    <property type="term" value="P:protein ubiquitination"/>
    <property type="evidence" value="ECO:0007669"/>
    <property type="project" value="UniProtKB-UniPathway"/>
</dbReference>
<dbReference type="GO" id="GO:0009723">
    <property type="term" value="P:response to ethylene"/>
    <property type="evidence" value="ECO:0000315"/>
    <property type="project" value="TAIR"/>
</dbReference>
<dbReference type="GO" id="GO:0006511">
    <property type="term" value="P:ubiquitin-dependent protein catabolic process"/>
    <property type="evidence" value="ECO:0000304"/>
    <property type="project" value="TAIR"/>
</dbReference>
<dbReference type="CDD" id="cd22159">
    <property type="entry name" value="F-box_AtTIR1-like"/>
    <property type="match status" value="1"/>
</dbReference>
<dbReference type="FunFam" id="3.80.10.10:FF:000451">
    <property type="entry name" value="EIN3-binding F-box protein 1"/>
    <property type="match status" value="1"/>
</dbReference>
<dbReference type="FunFam" id="3.80.10.10:FF:000473">
    <property type="entry name" value="EIN3-binding F-box protein 1"/>
    <property type="match status" value="1"/>
</dbReference>
<dbReference type="FunFam" id="3.80.10.10:FF:000595">
    <property type="entry name" value="EIN3-binding F-box protein 1"/>
    <property type="match status" value="1"/>
</dbReference>
<dbReference type="Gene3D" id="1.20.1280.50">
    <property type="match status" value="1"/>
</dbReference>
<dbReference type="Gene3D" id="3.80.10.10">
    <property type="entry name" value="Ribonuclease Inhibitor"/>
    <property type="match status" value="4"/>
</dbReference>
<dbReference type="InterPro" id="IPR036047">
    <property type="entry name" value="F-box-like_dom_sf"/>
</dbReference>
<dbReference type="InterPro" id="IPR001810">
    <property type="entry name" value="F-box_dom"/>
</dbReference>
<dbReference type="InterPro" id="IPR001611">
    <property type="entry name" value="Leu-rich_rpt"/>
</dbReference>
<dbReference type="InterPro" id="IPR006553">
    <property type="entry name" value="Leu-rich_rpt_Cys-con_subtyp"/>
</dbReference>
<dbReference type="InterPro" id="IPR032675">
    <property type="entry name" value="LRR_dom_sf"/>
</dbReference>
<dbReference type="PANTHER" id="PTHR13318:SF178">
    <property type="entry name" value="OS02G0200900 PROTEIN"/>
    <property type="match status" value="1"/>
</dbReference>
<dbReference type="PANTHER" id="PTHR13318">
    <property type="entry name" value="PARTNER OF PAIRED, ISOFORM B-RELATED"/>
    <property type="match status" value="1"/>
</dbReference>
<dbReference type="Pfam" id="PF12937">
    <property type="entry name" value="F-box-like"/>
    <property type="match status" value="1"/>
</dbReference>
<dbReference type="Pfam" id="PF13516">
    <property type="entry name" value="LRR_6"/>
    <property type="match status" value="3"/>
</dbReference>
<dbReference type="SMART" id="SM00256">
    <property type="entry name" value="FBOX"/>
    <property type="match status" value="1"/>
</dbReference>
<dbReference type="SMART" id="SM00367">
    <property type="entry name" value="LRR_CC"/>
    <property type="match status" value="13"/>
</dbReference>
<dbReference type="SUPFAM" id="SSF81383">
    <property type="entry name" value="F-box domain"/>
    <property type="match status" value="1"/>
</dbReference>
<dbReference type="SUPFAM" id="SSF52047">
    <property type="entry name" value="RNI-like"/>
    <property type="match status" value="2"/>
</dbReference>
<sequence length="628" mass="66589">MSQIFSFAGENDFYRRGAIYPNPKDASLLLSLGSFADVYFPPSKRSRVVAPTIFSAFEKKPVSIDVLPDECLFEIFRRLSGPQERSACAFVSKQWLTLVSSIRQKEIDVPSKITEDGDDCEGCLSRSLDGKKATDVRLAAIAVGTAGRGGLGKLSIRGSNSAKVSDLGLRSIGRSCPSLGSLSLWNVSTITDNGLLEIAEGCAQLEKLELNRCSTITDKGLVAIAKSCPNLTELTLEACSRIGDEGLLAIARSCSKLKSVSIKNCPLVRDQGIASLLSNTTCSLAKLKLQMLNVTDVSLAVVGHYGLSITDLVLAGLSHVSEKGFWVMGNGVGLQKLNSLTITACQGVTDMGLESVGKGCPNMKKAIISKSPLLSDNGLVSFAKASLSLESLQLEECHRVTQFGFFGSLLNCGEKLKAFSLVNCLSIRDLTTGLPASSHCSALRSLSIRNCPGFGDANLAAIGKLCPQLEDIDLCGLKGITESGFLHLIQSSLVKINFSGCSNLTDRVISAITARNGWTLEVLNIDGCSNITDASLVSIAANCQILSDLDISKCAISDSGIQALASSDKLKLQILSVAGCSMVTDKSLPAIVGLGSTLLGLNLQQCRSISNSTVDFLVERLYKCDILS</sequence>
<organism>
    <name type="scientific">Arabidopsis thaliana</name>
    <name type="common">Mouse-ear cress</name>
    <dbReference type="NCBI Taxonomy" id="3702"/>
    <lineage>
        <taxon>Eukaryota</taxon>
        <taxon>Viridiplantae</taxon>
        <taxon>Streptophyta</taxon>
        <taxon>Embryophyta</taxon>
        <taxon>Tracheophyta</taxon>
        <taxon>Spermatophyta</taxon>
        <taxon>Magnoliopsida</taxon>
        <taxon>eudicotyledons</taxon>
        <taxon>Gunneridae</taxon>
        <taxon>Pentapetalae</taxon>
        <taxon>rosids</taxon>
        <taxon>malvids</taxon>
        <taxon>Brassicales</taxon>
        <taxon>Brassicaceae</taxon>
        <taxon>Camelineae</taxon>
        <taxon>Arabidopsis</taxon>
    </lineage>
</organism>
<feature type="chain" id="PRO_0000272245" description="EIN3-binding F-box protein 1">
    <location>
        <begin position="1"/>
        <end position="628"/>
    </location>
</feature>
<feature type="domain" description="F-box">
    <location>
        <begin position="61"/>
        <end position="109"/>
    </location>
</feature>